<name>PG163_MONPV</name>
<dbReference type="EMBL" id="MT903340">
    <property type="protein sequence ID" value="QNP13017.1"/>
    <property type="molecule type" value="Genomic_DNA"/>
</dbReference>
<dbReference type="RefSeq" id="YP_010377144.1">
    <property type="nucleotide sequence ID" value="NC_063383.1"/>
</dbReference>
<dbReference type="GeneID" id="72551557"/>
<dbReference type="Proteomes" id="UP000516359">
    <property type="component" value="Genome"/>
</dbReference>
<dbReference type="GO" id="GO:0044174">
    <property type="term" value="C:host cell endosome"/>
    <property type="evidence" value="ECO:0007669"/>
    <property type="project" value="UniProtKB-SubCell"/>
</dbReference>
<dbReference type="GO" id="GO:0039505">
    <property type="term" value="P:symbiont-mediated suppression of host antigen processing and presentation of peptide antigen via MHC class II"/>
    <property type="evidence" value="ECO:0007669"/>
    <property type="project" value="UniProtKB-KW"/>
</dbReference>
<dbReference type="InterPro" id="IPR009247">
    <property type="entry name" value="Chordopox_A35R"/>
</dbReference>
<dbReference type="Pfam" id="PF05989">
    <property type="entry name" value="Chordopox_A35R"/>
    <property type="match status" value="1"/>
</dbReference>
<protein>
    <recommendedName>
        <fullName>Protein OPG163</fullName>
    </recommendedName>
</protein>
<comment type="function">
    <text evidence="1">Mildly affects the expression of MHC class II molecules on the surface of host antigen presenting cells (APCs).</text>
</comment>
<comment type="subcellular location">
    <subcellularLocation>
        <location evidence="1">Host endosome</location>
    </subcellularLocation>
</comment>
<comment type="induction">
    <text>Expressed in the early phase of the viral replicative cycle.</text>
</comment>
<comment type="similarity">
    <text evidence="2">Belongs to the orthopoxvirus OPG163 family.</text>
</comment>
<organismHost>
    <name type="scientific">Cynomys gunnisoni</name>
    <name type="common">Gunnison's prairie dog</name>
    <name type="synonym">Spermophilus gunnisoni</name>
    <dbReference type="NCBI Taxonomy" id="45479"/>
</organismHost>
<organismHost>
    <name type="scientific">Cynomys leucurus</name>
    <name type="common">White-tailed prairie dog</name>
    <dbReference type="NCBI Taxonomy" id="99825"/>
</organismHost>
<organismHost>
    <name type="scientific">Cynomys ludovicianus</name>
    <name type="common">Black-tailed prairie dog</name>
    <dbReference type="NCBI Taxonomy" id="45480"/>
</organismHost>
<organismHost>
    <name type="scientific">Cynomys mexicanus</name>
    <name type="common">Mexican prairie dog</name>
    <dbReference type="NCBI Taxonomy" id="99826"/>
</organismHost>
<organismHost>
    <name type="scientific">Cynomys parvidens</name>
    <name type="common">Utah prairie dog</name>
    <dbReference type="NCBI Taxonomy" id="99827"/>
</organismHost>
<organismHost>
    <name type="scientific">Gliridae</name>
    <name type="common">dormice</name>
    <dbReference type="NCBI Taxonomy" id="30650"/>
</organismHost>
<organismHost>
    <name type="scientific">Heliosciurus ruwenzorii</name>
    <name type="common">Ruwenzori sun squirrel</name>
    <dbReference type="NCBI Taxonomy" id="226685"/>
</organismHost>
<organismHost>
    <name type="scientific">Homo sapiens</name>
    <name type="common">Human</name>
    <dbReference type="NCBI Taxonomy" id="9606"/>
</organismHost>
<organismHost>
    <name type="scientific">Mus musculus</name>
    <name type="common">Mouse</name>
    <dbReference type="NCBI Taxonomy" id="10090"/>
</organismHost>
<feature type="chain" id="PRO_0000457546" description="Protein OPG163">
    <location>
        <begin position="1"/>
        <end position="176"/>
    </location>
</feature>
<organism>
    <name type="scientific">Monkeypox virus</name>
    <dbReference type="NCBI Taxonomy" id="10244"/>
    <lineage>
        <taxon>Viruses</taxon>
        <taxon>Varidnaviria</taxon>
        <taxon>Bamfordvirae</taxon>
        <taxon>Nucleocytoviricota</taxon>
        <taxon>Pokkesviricetes</taxon>
        <taxon>Chitovirales</taxon>
        <taxon>Poxviridae</taxon>
        <taxon>Chordopoxvirinae</taxon>
        <taxon>Orthopoxvirus</taxon>
    </lineage>
</organism>
<gene>
    <name type="primary">OPG163</name>
    <name type="ORF">MPXVgp147</name>
</gene>
<proteinExistence type="evidence at transcript level"/>
<keyword id="KW-1039">Host endosome</keyword>
<keyword id="KW-0945">Host-virus interaction</keyword>
<keyword id="KW-1080">Inhibition of host adaptive immune response by virus</keyword>
<keyword id="KW-1116">Inhibition of host MHC class II molecule presentation by virus</keyword>
<keyword id="KW-1185">Reference proteome</keyword>
<keyword id="KW-0899">Viral immunoevasion</keyword>
<sequence>MDAAFVITPMGVLTITDTLYDDLDISIMDFIGPYIIGNIKIVQIDVRDIKYSDMQKCYFSYKGKIVPQDSNDLARFNIYSICTAYRSKNTIIIACDYDIMLDIEGKHQPFYLFPSIDVFNATIIEAYNLYTAGDYHLIINPSDNLKMKLSFNSSFCISDGNGWIIIDGKCNSNFLS</sequence>
<accession>A0A7H0DND4</accession>
<reference key="1">
    <citation type="journal article" date="2022" name="J. Infect. Dis.">
        <title>Exportation of Monkeypox virus from the African continent.</title>
        <authorList>
            <person name="Mauldin M.R."/>
            <person name="McCollum A.M."/>
            <person name="Nakazawa Y.J."/>
            <person name="Mandra A."/>
            <person name="Whitehouse E.R."/>
            <person name="Davidson W."/>
            <person name="Zhao H."/>
            <person name="Gao J."/>
            <person name="Li Y."/>
            <person name="Doty J."/>
            <person name="Yinka-Ogunleye A."/>
            <person name="Akinpelu A."/>
            <person name="Aruna O."/>
            <person name="Naidoo D."/>
            <person name="Lewandowski K."/>
            <person name="Afrough B."/>
            <person name="Graham V."/>
            <person name="Aarons E."/>
            <person name="Hewson R."/>
            <person name="Vipond R."/>
            <person name="Dunning J."/>
            <person name="Chand M."/>
            <person name="Brown C."/>
            <person name="Cohen-Gihon I."/>
            <person name="Erez N."/>
            <person name="Shifman O."/>
            <person name="Israeli O."/>
            <person name="Sharon M."/>
            <person name="Schwartz E."/>
            <person name="Beth-Din A."/>
            <person name="Zvi A."/>
            <person name="Mak T.M."/>
            <person name="Ng Y.K."/>
            <person name="Cui L."/>
            <person name="Lin R.T.P."/>
            <person name="Olson V.A."/>
            <person name="Brooks T."/>
            <person name="Paran N."/>
            <person name="Ihekweazu C."/>
            <person name="Reynolds M.G."/>
        </authorList>
    </citation>
    <scope>NUCLEOTIDE SEQUENCE [LARGE SCALE GENOMIC DNA]</scope>
    <source>
        <strain>MPXV-M5312_HM12_Rivers</strain>
    </source>
</reference>
<evidence type="ECO:0000250" key="1">
    <source>
        <dbReference type="UniProtKB" id="Q01232"/>
    </source>
</evidence>
<evidence type="ECO:0000305" key="2"/>